<comment type="function">
    <text evidence="1">Facilitates the functional incorporation of the urease nickel metallocenter. This process requires GTP hydrolysis, probably effectuated by UreG.</text>
</comment>
<comment type="subunit">
    <text evidence="1">Homodimer. UreD, UreF and UreG form a complex that acts as a GTP-hydrolysis-dependent molecular chaperone, activating the urease apoprotein by helping to assemble the nickel containing metallocenter of UreC. The UreE protein probably delivers the nickel.</text>
</comment>
<comment type="subcellular location">
    <subcellularLocation>
        <location evidence="1">Cytoplasm</location>
    </subcellularLocation>
</comment>
<comment type="similarity">
    <text evidence="1">Belongs to the SIMIBI class G3E GTPase family. UreG subfamily.</text>
</comment>
<sequence length="211" mass="23139">MRKYIKIGVAGPVGAGKTALIERLTREIASKYSVAVITNDIYTQEDAEFLTKNSLLPPERIMGVETGGCPHTAIREDASMNLEAVDEMVARFPEVELIFIESGGDNLSATFSPDLADVTIFVIDVAQGEKIPRKGGPGITRSDLLVINKTDLAPFVGADLSVMKRDARRMRNGQPFIFTNLMKNENLDGVIGWIEKYALLKNIEDPASLVR</sequence>
<name>UREG_ACTP7</name>
<evidence type="ECO:0000255" key="1">
    <source>
        <dbReference type="HAMAP-Rule" id="MF_01389"/>
    </source>
</evidence>
<feature type="chain" id="PRO_1000145161" description="Urease accessory protein UreG">
    <location>
        <begin position="1"/>
        <end position="211"/>
    </location>
</feature>
<feature type="binding site" evidence="1">
    <location>
        <begin position="11"/>
        <end position="18"/>
    </location>
    <ligand>
        <name>GTP</name>
        <dbReference type="ChEBI" id="CHEBI:37565"/>
    </ligand>
</feature>
<organism>
    <name type="scientific">Actinobacillus pleuropneumoniae serotype 7 (strain AP76)</name>
    <dbReference type="NCBI Taxonomy" id="537457"/>
    <lineage>
        <taxon>Bacteria</taxon>
        <taxon>Pseudomonadati</taxon>
        <taxon>Pseudomonadota</taxon>
        <taxon>Gammaproteobacteria</taxon>
        <taxon>Pasteurellales</taxon>
        <taxon>Pasteurellaceae</taxon>
        <taxon>Actinobacillus</taxon>
    </lineage>
</organism>
<proteinExistence type="inferred from homology"/>
<protein>
    <recommendedName>
        <fullName evidence="1">Urease accessory protein UreG</fullName>
    </recommendedName>
</protein>
<reference key="1">
    <citation type="submission" date="2008-06" db="EMBL/GenBank/DDBJ databases">
        <title>Genome and proteome analysis of A. pleuropneumoniae serotype 7.</title>
        <authorList>
            <person name="Linke B."/>
            <person name="Buettner F."/>
            <person name="Martinez-Arias R."/>
            <person name="Goesmann A."/>
            <person name="Baltes N."/>
            <person name="Tegetmeyer H."/>
            <person name="Singh M."/>
            <person name="Gerlach G.F."/>
        </authorList>
    </citation>
    <scope>NUCLEOTIDE SEQUENCE [LARGE SCALE GENOMIC DNA]</scope>
    <source>
        <strain>AP76</strain>
    </source>
</reference>
<gene>
    <name evidence="1" type="primary">ureG</name>
    <name type="ordered locus">APP7_1674</name>
</gene>
<accession>B3H2K9</accession>
<dbReference type="EMBL" id="CP001091">
    <property type="protein sequence ID" value="ACE62326.1"/>
    <property type="molecule type" value="Genomic_DNA"/>
</dbReference>
<dbReference type="RefSeq" id="WP_005602343.1">
    <property type="nucleotide sequence ID" value="NC_010939.1"/>
</dbReference>
<dbReference type="SMR" id="B3H2K9"/>
<dbReference type="KEGG" id="apa:APP7_1674"/>
<dbReference type="HOGENOM" id="CLU_072144_1_0_6"/>
<dbReference type="Proteomes" id="UP000001226">
    <property type="component" value="Chromosome"/>
</dbReference>
<dbReference type="GO" id="GO:0005737">
    <property type="term" value="C:cytoplasm"/>
    <property type="evidence" value="ECO:0007669"/>
    <property type="project" value="UniProtKB-SubCell"/>
</dbReference>
<dbReference type="GO" id="GO:0005525">
    <property type="term" value="F:GTP binding"/>
    <property type="evidence" value="ECO:0007669"/>
    <property type="project" value="UniProtKB-KW"/>
</dbReference>
<dbReference type="GO" id="GO:0003924">
    <property type="term" value="F:GTPase activity"/>
    <property type="evidence" value="ECO:0007669"/>
    <property type="project" value="InterPro"/>
</dbReference>
<dbReference type="GO" id="GO:0016151">
    <property type="term" value="F:nickel cation binding"/>
    <property type="evidence" value="ECO:0007669"/>
    <property type="project" value="UniProtKB-UniRule"/>
</dbReference>
<dbReference type="GO" id="GO:0043419">
    <property type="term" value="P:urea catabolic process"/>
    <property type="evidence" value="ECO:0007669"/>
    <property type="project" value="InterPro"/>
</dbReference>
<dbReference type="CDD" id="cd05540">
    <property type="entry name" value="UreG"/>
    <property type="match status" value="1"/>
</dbReference>
<dbReference type="FunFam" id="3.40.50.300:FF:000208">
    <property type="entry name" value="Urease accessory protein UreG"/>
    <property type="match status" value="1"/>
</dbReference>
<dbReference type="Gene3D" id="3.40.50.300">
    <property type="entry name" value="P-loop containing nucleotide triphosphate hydrolases"/>
    <property type="match status" value="1"/>
</dbReference>
<dbReference type="HAMAP" id="MF_01389">
    <property type="entry name" value="UreG"/>
    <property type="match status" value="1"/>
</dbReference>
<dbReference type="InterPro" id="IPR003495">
    <property type="entry name" value="CobW/HypB/UreG_nucleotide-bd"/>
</dbReference>
<dbReference type="InterPro" id="IPR027417">
    <property type="entry name" value="P-loop_NTPase"/>
</dbReference>
<dbReference type="InterPro" id="IPR004400">
    <property type="entry name" value="UreG"/>
</dbReference>
<dbReference type="NCBIfam" id="TIGR00101">
    <property type="entry name" value="ureG"/>
    <property type="match status" value="1"/>
</dbReference>
<dbReference type="PANTHER" id="PTHR31715">
    <property type="entry name" value="UREASE ACCESSORY PROTEIN G"/>
    <property type="match status" value="1"/>
</dbReference>
<dbReference type="PANTHER" id="PTHR31715:SF0">
    <property type="entry name" value="UREASE ACCESSORY PROTEIN G"/>
    <property type="match status" value="1"/>
</dbReference>
<dbReference type="Pfam" id="PF02492">
    <property type="entry name" value="cobW"/>
    <property type="match status" value="1"/>
</dbReference>
<dbReference type="PIRSF" id="PIRSF005624">
    <property type="entry name" value="Ni-bind_GTPase"/>
    <property type="match status" value="1"/>
</dbReference>
<dbReference type="SUPFAM" id="SSF52540">
    <property type="entry name" value="P-loop containing nucleoside triphosphate hydrolases"/>
    <property type="match status" value="1"/>
</dbReference>
<keyword id="KW-0143">Chaperone</keyword>
<keyword id="KW-0963">Cytoplasm</keyword>
<keyword id="KW-0342">GTP-binding</keyword>
<keyword id="KW-0996">Nickel insertion</keyword>
<keyword id="KW-0547">Nucleotide-binding</keyword>